<name>GCH4_PSE14</name>
<evidence type="ECO:0000255" key="1">
    <source>
        <dbReference type="HAMAP-Rule" id="MF_01527"/>
    </source>
</evidence>
<sequence length="301" mass="32977">MNNPLPDVALTEVSSALVSLDWVGMQGVEVPVRLAEAGVRYPVHAHVDLQVDLADPSVKGIHMSRLYRLLDRYAEHQILSPDTLGALLEAMVESHLDCHSSRARLTLSFNLLCRRPALITEGLSGWKSYPVKLDATWHAGRLCLDVSADITYSSTCPCSAALSRQLLEGAFTARFGRQSFVDPMQVATWLRENASFATPHSQRSVATVQVRVAEQATELGLMTLIDAVEQALGTPVQTAVKRADEQAFARLNGQNLMYVEDAARKVQQALEGRYAASSVSVRHFESLHPHDAAAQTSNYLS</sequence>
<protein>
    <recommendedName>
        <fullName evidence="1">GTP cyclohydrolase FolE2</fullName>
        <ecNumber evidence="1">3.5.4.16</ecNumber>
    </recommendedName>
</protein>
<accession>Q48HN1</accession>
<reference key="1">
    <citation type="journal article" date="2005" name="J. Bacteriol.">
        <title>Whole-genome sequence analysis of Pseudomonas syringae pv. phaseolicola 1448A reveals divergence among pathovars in genes involved in virulence and transposition.</title>
        <authorList>
            <person name="Joardar V."/>
            <person name="Lindeberg M."/>
            <person name="Jackson R.W."/>
            <person name="Selengut J."/>
            <person name="Dodson R."/>
            <person name="Brinkac L.M."/>
            <person name="Daugherty S.C."/>
            <person name="DeBoy R.T."/>
            <person name="Durkin A.S."/>
            <person name="Gwinn Giglio M."/>
            <person name="Madupu R."/>
            <person name="Nelson W.C."/>
            <person name="Rosovitz M.J."/>
            <person name="Sullivan S.A."/>
            <person name="Crabtree J."/>
            <person name="Creasy T."/>
            <person name="Davidsen T.M."/>
            <person name="Haft D.H."/>
            <person name="Zafar N."/>
            <person name="Zhou L."/>
            <person name="Halpin R."/>
            <person name="Holley T."/>
            <person name="Khouri H.M."/>
            <person name="Feldblyum T.V."/>
            <person name="White O."/>
            <person name="Fraser C.M."/>
            <person name="Chatterjee A.K."/>
            <person name="Cartinhour S."/>
            <person name="Schneider D."/>
            <person name="Mansfield J.W."/>
            <person name="Collmer A."/>
            <person name="Buell R."/>
        </authorList>
    </citation>
    <scope>NUCLEOTIDE SEQUENCE [LARGE SCALE GENOMIC DNA]</scope>
    <source>
        <strain>1448A / Race 6</strain>
    </source>
</reference>
<dbReference type="EC" id="3.5.4.16" evidence="1"/>
<dbReference type="EMBL" id="CP000058">
    <property type="protein sequence ID" value="AAZ37560.1"/>
    <property type="molecule type" value="Genomic_DNA"/>
</dbReference>
<dbReference type="RefSeq" id="WP_011168867.1">
    <property type="nucleotide sequence ID" value="NC_005773.3"/>
</dbReference>
<dbReference type="SMR" id="Q48HN1"/>
<dbReference type="KEGG" id="psp:PSPPH_2920"/>
<dbReference type="eggNOG" id="COG1469">
    <property type="taxonomic scope" value="Bacteria"/>
</dbReference>
<dbReference type="HOGENOM" id="CLU_062816_0_0_6"/>
<dbReference type="UniPathway" id="UPA00848">
    <property type="reaction ID" value="UER00151"/>
</dbReference>
<dbReference type="Proteomes" id="UP000000551">
    <property type="component" value="Chromosome"/>
</dbReference>
<dbReference type="GO" id="GO:0003934">
    <property type="term" value="F:GTP cyclohydrolase I activity"/>
    <property type="evidence" value="ECO:0007669"/>
    <property type="project" value="UniProtKB-UniRule"/>
</dbReference>
<dbReference type="GO" id="GO:0046654">
    <property type="term" value="P:tetrahydrofolate biosynthetic process"/>
    <property type="evidence" value="ECO:0007669"/>
    <property type="project" value="UniProtKB-UniRule"/>
</dbReference>
<dbReference type="Gene3D" id="3.10.270.10">
    <property type="entry name" value="Urate Oxidase"/>
    <property type="match status" value="1"/>
</dbReference>
<dbReference type="HAMAP" id="MF_01527_B">
    <property type="entry name" value="GTP_cyclohydrol_B"/>
    <property type="match status" value="1"/>
</dbReference>
<dbReference type="InterPro" id="IPR022838">
    <property type="entry name" value="GTP_cyclohydrolase_FolE2"/>
</dbReference>
<dbReference type="InterPro" id="IPR003801">
    <property type="entry name" value="GTP_cyclohydrolase_FolE2/MptA"/>
</dbReference>
<dbReference type="NCBIfam" id="NF010200">
    <property type="entry name" value="PRK13674.1-1"/>
    <property type="match status" value="1"/>
</dbReference>
<dbReference type="PANTHER" id="PTHR36445">
    <property type="entry name" value="GTP CYCLOHYDROLASE MPTA"/>
    <property type="match status" value="1"/>
</dbReference>
<dbReference type="PANTHER" id="PTHR36445:SF1">
    <property type="entry name" value="GTP CYCLOHYDROLASE MPTA"/>
    <property type="match status" value="1"/>
</dbReference>
<dbReference type="Pfam" id="PF02649">
    <property type="entry name" value="GCHY-1"/>
    <property type="match status" value="1"/>
</dbReference>
<feature type="chain" id="PRO_0000289511" description="GTP cyclohydrolase FolE2">
    <location>
        <begin position="1"/>
        <end position="301"/>
    </location>
</feature>
<feature type="site" description="May be catalytically important" evidence="1">
    <location>
        <position position="156"/>
    </location>
</feature>
<proteinExistence type="inferred from homology"/>
<organism>
    <name type="scientific">Pseudomonas savastanoi pv. phaseolicola (strain 1448A / Race 6)</name>
    <name type="common">Pseudomonas syringae pv. phaseolicola (strain 1448A / Race 6)</name>
    <dbReference type="NCBI Taxonomy" id="264730"/>
    <lineage>
        <taxon>Bacteria</taxon>
        <taxon>Pseudomonadati</taxon>
        <taxon>Pseudomonadota</taxon>
        <taxon>Gammaproteobacteria</taxon>
        <taxon>Pseudomonadales</taxon>
        <taxon>Pseudomonadaceae</taxon>
        <taxon>Pseudomonas</taxon>
    </lineage>
</organism>
<gene>
    <name evidence="1" type="primary">folE2</name>
    <name type="ordered locus">PSPPH_2920</name>
</gene>
<comment type="function">
    <text evidence="1">Converts GTP to 7,8-dihydroneopterin triphosphate.</text>
</comment>
<comment type="catalytic activity">
    <reaction evidence="1">
        <text>GTP + H2O = 7,8-dihydroneopterin 3'-triphosphate + formate + H(+)</text>
        <dbReference type="Rhea" id="RHEA:17473"/>
        <dbReference type="ChEBI" id="CHEBI:15377"/>
        <dbReference type="ChEBI" id="CHEBI:15378"/>
        <dbReference type="ChEBI" id="CHEBI:15740"/>
        <dbReference type="ChEBI" id="CHEBI:37565"/>
        <dbReference type="ChEBI" id="CHEBI:58462"/>
        <dbReference type="EC" id="3.5.4.16"/>
    </reaction>
</comment>
<comment type="pathway">
    <text evidence="1">Cofactor biosynthesis; 7,8-dihydroneopterin triphosphate biosynthesis; 7,8-dihydroneopterin triphosphate from GTP: step 1/1.</text>
</comment>
<comment type="similarity">
    <text evidence="1">Belongs to the GTP cyclohydrolase IV family.</text>
</comment>
<keyword id="KW-0378">Hydrolase</keyword>